<dbReference type="EMBL" id="CU207366">
    <property type="protein sequence ID" value="CAL67792.1"/>
    <property type="molecule type" value="Genomic_DNA"/>
</dbReference>
<dbReference type="RefSeq" id="WP_011710695.1">
    <property type="nucleotide sequence ID" value="NC_008571.1"/>
</dbReference>
<dbReference type="SMR" id="A0M597"/>
<dbReference type="STRING" id="411154.GFO_2838"/>
<dbReference type="KEGG" id="gfo:GFO_2838"/>
<dbReference type="eggNOG" id="COG0088">
    <property type="taxonomic scope" value="Bacteria"/>
</dbReference>
<dbReference type="HOGENOM" id="CLU_041575_5_2_10"/>
<dbReference type="OrthoDB" id="9803201at2"/>
<dbReference type="Proteomes" id="UP000000755">
    <property type="component" value="Chromosome"/>
</dbReference>
<dbReference type="GO" id="GO:1990904">
    <property type="term" value="C:ribonucleoprotein complex"/>
    <property type="evidence" value="ECO:0007669"/>
    <property type="project" value="UniProtKB-KW"/>
</dbReference>
<dbReference type="GO" id="GO:0005840">
    <property type="term" value="C:ribosome"/>
    <property type="evidence" value="ECO:0007669"/>
    <property type="project" value="UniProtKB-KW"/>
</dbReference>
<dbReference type="GO" id="GO:0019843">
    <property type="term" value="F:rRNA binding"/>
    <property type="evidence" value="ECO:0007669"/>
    <property type="project" value="UniProtKB-UniRule"/>
</dbReference>
<dbReference type="GO" id="GO:0003735">
    <property type="term" value="F:structural constituent of ribosome"/>
    <property type="evidence" value="ECO:0007669"/>
    <property type="project" value="InterPro"/>
</dbReference>
<dbReference type="GO" id="GO:0006412">
    <property type="term" value="P:translation"/>
    <property type="evidence" value="ECO:0007669"/>
    <property type="project" value="UniProtKB-UniRule"/>
</dbReference>
<dbReference type="Gene3D" id="3.40.1370.10">
    <property type="match status" value="1"/>
</dbReference>
<dbReference type="HAMAP" id="MF_01328_B">
    <property type="entry name" value="Ribosomal_uL4_B"/>
    <property type="match status" value="1"/>
</dbReference>
<dbReference type="InterPro" id="IPR002136">
    <property type="entry name" value="Ribosomal_uL4"/>
</dbReference>
<dbReference type="InterPro" id="IPR013005">
    <property type="entry name" value="Ribosomal_uL4-like"/>
</dbReference>
<dbReference type="InterPro" id="IPR023574">
    <property type="entry name" value="Ribosomal_uL4_dom_sf"/>
</dbReference>
<dbReference type="NCBIfam" id="TIGR03953">
    <property type="entry name" value="rplD_bact"/>
    <property type="match status" value="1"/>
</dbReference>
<dbReference type="PANTHER" id="PTHR10746">
    <property type="entry name" value="50S RIBOSOMAL PROTEIN L4"/>
    <property type="match status" value="1"/>
</dbReference>
<dbReference type="PANTHER" id="PTHR10746:SF6">
    <property type="entry name" value="LARGE RIBOSOMAL SUBUNIT PROTEIN UL4M"/>
    <property type="match status" value="1"/>
</dbReference>
<dbReference type="Pfam" id="PF00573">
    <property type="entry name" value="Ribosomal_L4"/>
    <property type="match status" value="1"/>
</dbReference>
<dbReference type="SUPFAM" id="SSF52166">
    <property type="entry name" value="Ribosomal protein L4"/>
    <property type="match status" value="1"/>
</dbReference>
<organism>
    <name type="scientific">Christiangramia forsetii (strain DSM 17595 / CGMCC 1.15422 / KT0803)</name>
    <name type="common">Gramella forsetii</name>
    <dbReference type="NCBI Taxonomy" id="411154"/>
    <lineage>
        <taxon>Bacteria</taxon>
        <taxon>Pseudomonadati</taxon>
        <taxon>Bacteroidota</taxon>
        <taxon>Flavobacteriia</taxon>
        <taxon>Flavobacteriales</taxon>
        <taxon>Flavobacteriaceae</taxon>
        <taxon>Christiangramia</taxon>
    </lineage>
</organism>
<protein>
    <recommendedName>
        <fullName evidence="1">Large ribosomal subunit protein uL4</fullName>
    </recommendedName>
    <alternativeName>
        <fullName evidence="3">50S ribosomal protein L4</fullName>
    </alternativeName>
</protein>
<keyword id="KW-0687">Ribonucleoprotein</keyword>
<keyword id="KW-0689">Ribosomal protein</keyword>
<keyword id="KW-0694">RNA-binding</keyword>
<keyword id="KW-0699">rRNA-binding</keyword>
<reference key="1">
    <citation type="journal article" date="2006" name="Environ. Microbiol.">
        <title>Whole genome analysis of the marine Bacteroidetes'Gramella forsetii' reveals adaptations to degradation of polymeric organic matter.</title>
        <authorList>
            <person name="Bauer M."/>
            <person name="Kube M."/>
            <person name="Teeling H."/>
            <person name="Richter M."/>
            <person name="Lombardot T."/>
            <person name="Allers E."/>
            <person name="Wuerdemann C.A."/>
            <person name="Quast C."/>
            <person name="Kuhl H."/>
            <person name="Knaust F."/>
            <person name="Woebken D."/>
            <person name="Bischof K."/>
            <person name="Mussmann M."/>
            <person name="Choudhuri J.V."/>
            <person name="Meyer F."/>
            <person name="Reinhardt R."/>
            <person name="Amann R.I."/>
            <person name="Gloeckner F.O."/>
        </authorList>
    </citation>
    <scope>NUCLEOTIDE SEQUENCE [LARGE SCALE GENOMIC DNA]</scope>
    <source>
        <strain>DSM 17595 / CGMCC 1.15422 / KT0803</strain>
    </source>
</reference>
<gene>
    <name evidence="1" type="primary">rplD</name>
    <name type="ordered locus">GFO_2838</name>
</gene>
<feature type="chain" id="PRO_1000052408" description="Large ribosomal subunit protein uL4">
    <location>
        <begin position="1"/>
        <end position="208"/>
    </location>
</feature>
<feature type="region of interest" description="Disordered" evidence="2">
    <location>
        <begin position="45"/>
        <end position="77"/>
    </location>
</feature>
<proteinExistence type="inferred from homology"/>
<name>RL4_CHRFK</name>
<comment type="function">
    <text evidence="1">One of the primary rRNA binding proteins, this protein initially binds near the 5'-end of the 23S rRNA. It is important during the early stages of 50S assembly. It makes multiple contacts with different domains of the 23S rRNA in the assembled 50S subunit and ribosome.</text>
</comment>
<comment type="function">
    <text evidence="1">Forms part of the polypeptide exit tunnel.</text>
</comment>
<comment type="subunit">
    <text evidence="1">Part of the 50S ribosomal subunit.</text>
</comment>
<comment type="similarity">
    <text evidence="1">Belongs to the universal ribosomal protein uL4 family.</text>
</comment>
<sequence>MEIAVLDIKGKETGRKAKLSDSVFAIEPNDHAVYLDVKQYLANQRQGTHKAKERAEIKGSTRKIKKQKGTGTARAGSIKSPIFKGGGRVFGPRPRNYGFKLNKNLKRLARKSALSIKANDKAIMVIEDFSFDTPKTKNFTEVLKALGIESKKSLIVLGDSNKNVYLSSRNLKTSEVISSSELSTYKILNAKSIVFLEGSLEGIESKLS</sequence>
<accession>A0M597</accession>
<evidence type="ECO:0000255" key="1">
    <source>
        <dbReference type="HAMAP-Rule" id="MF_01328"/>
    </source>
</evidence>
<evidence type="ECO:0000256" key="2">
    <source>
        <dbReference type="SAM" id="MobiDB-lite"/>
    </source>
</evidence>
<evidence type="ECO:0000305" key="3"/>